<comment type="subunit">
    <text evidence="1">Part of the 50S ribosomal subunit. Contacts protein L32.</text>
</comment>
<comment type="similarity">
    <text evidence="1">Belongs to the bacterial ribosomal protein bL17 family.</text>
</comment>
<protein>
    <recommendedName>
        <fullName evidence="1">Large ribosomal subunit protein bL17</fullName>
    </recommendedName>
    <alternativeName>
        <fullName evidence="2">50S ribosomal protein L17</fullName>
    </alternativeName>
</protein>
<accession>B1I1B4</accession>
<reference key="1">
    <citation type="submission" date="2007-10" db="EMBL/GenBank/DDBJ databases">
        <title>Complete sequence of chromosome of Desulforudis audaxviator MP104C.</title>
        <authorList>
            <person name="Copeland A."/>
            <person name="Lucas S."/>
            <person name="Lapidus A."/>
            <person name="Barry K."/>
            <person name="Glavina del Rio T."/>
            <person name="Dalin E."/>
            <person name="Tice H."/>
            <person name="Bruce D."/>
            <person name="Pitluck S."/>
            <person name="Lowry S.R."/>
            <person name="Larimer F."/>
            <person name="Land M.L."/>
            <person name="Hauser L."/>
            <person name="Kyrpides N."/>
            <person name="Ivanova N.N."/>
            <person name="Richardson P."/>
        </authorList>
    </citation>
    <scope>NUCLEOTIDE SEQUENCE [LARGE SCALE GENOMIC DNA]</scope>
    <source>
        <strain>MP104C</strain>
    </source>
</reference>
<gene>
    <name evidence="1" type="primary">rplQ</name>
    <name type="ordered locus">Daud_0254</name>
</gene>
<name>RL17_DESAP</name>
<dbReference type="EMBL" id="CP000860">
    <property type="protein sequence ID" value="ACA58815.1"/>
    <property type="molecule type" value="Genomic_DNA"/>
</dbReference>
<dbReference type="RefSeq" id="WP_012301407.1">
    <property type="nucleotide sequence ID" value="NC_010424.1"/>
</dbReference>
<dbReference type="SMR" id="B1I1B4"/>
<dbReference type="STRING" id="477974.Daud_0254"/>
<dbReference type="KEGG" id="dau:Daud_0254"/>
<dbReference type="eggNOG" id="COG0203">
    <property type="taxonomic scope" value="Bacteria"/>
</dbReference>
<dbReference type="HOGENOM" id="CLU_074407_2_2_9"/>
<dbReference type="OrthoDB" id="9809073at2"/>
<dbReference type="Proteomes" id="UP000008544">
    <property type="component" value="Chromosome"/>
</dbReference>
<dbReference type="GO" id="GO:0022625">
    <property type="term" value="C:cytosolic large ribosomal subunit"/>
    <property type="evidence" value="ECO:0007669"/>
    <property type="project" value="TreeGrafter"/>
</dbReference>
<dbReference type="GO" id="GO:0003735">
    <property type="term" value="F:structural constituent of ribosome"/>
    <property type="evidence" value="ECO:0007669"/>
    <property type="project" value="InterPro"/>
</dbReference>
<dbReference type="GO" id="GO:0006412">
    <property type="term" value="P:translation"/>
    <property type="evidence" value="ECO:0007669"/>
    <property type="project" value="UniProtKB-UniRule"/>
</dbReference>
<dbReference type="FunFam" id="3.90.1030.10:FF:000001">
    <property type="entry name" value="50S ribosomal protein L17"/>
    <property type="match status" value="1"/>
</dbReference>
<dbReference type="Gene3D" id="3.90.1030.10">
    <property type="entry name" value="Ribosomal protein L17"/>
    <property type="match status" value="1"/>
</dbReference>
<dbReference type="HAMAP" id="MF_01368">
    <property type="entry name" value="Ribosomal_bL17"/>
    <property type="match status" value="1"/>
</dbReference>
<dbReference type="InterPro" id="IPR000456">
    <property type="entry name" value="Ribosomal_bL17"/>
</dbReference>
<dbReference type="InterPro" id="IPR047859">
    <property type="entry name" value="Ribosomal_bL17_CS"/>
</dbReference>
<dbReference type="InterPro" id="IPR036373">
    <property type="entry name" value="Ribosomal_bL17_sf"/>
</dbReference>
<dbReference type="NCBIfam" id="TIGR00059">
    <property type="entry name" value="L17"/>
    <property type="match status" value="1"/>
</dbReference>
<dbReference type="PANTHER" id="PTHR14413:SF16">
    <property type="entry name" value="LARGE RIBOSOMAL SUBUNIT PROTEIN BL17M"/>
    <property type="match status" value="1"/>
</dbReference>
<dbReference type="PANTHER" id="PTHR14413">
    <property type="entry name" value="RIBOSOMAL PROTEIN L17"/>
    <property type="match status" value="1"/>
</dbReference>
<dbReference type="Pfam" id="PF01196">
    <property type="entry name" value="Ribosomal_L17"/>
    <property type="match status" value="1"/>
</dbReference>
<dbReference type="SUPFAM" id="SSF64263">
    <property type="entry name" value="Prokaryotic ribosomal protein L17"/>
    <property type="match status" value="1"/>
</dbReference>
<dbReference type="PROSITE" id="PS01167">
    <property type="entry name" value="RIBOSOMAL_L17"/>
    <property type="match status" value="1"/>
</dbReference>
<feature type="chain" id="PRO_1000184017" description="Large ribosomal subunit protein bL17">
    <location>
        <begin position="1"/>
        <end position="112"/>
    </location>
</feature>
<sequence length="112" mass="12873">MGYRRLGLRSDHRRAMLRNMVTSLIKEERITTTETRAKEVRSIAEKMVTLAKRGDLAARRQVSEYLFDEEAAKKLFNTVAARYKDRPGGYTRIVKVGFRRGDAAPMVILELV</sequence>
<proteinExistence type="inferred from homology"/>
<evidence type="ECO:0000255" key="1">
    <source>
        <dbReference type="HAMAP-Rule" id="MF_01368"/>
    </source>
</evidence>
<evidence type="ECO:0000305" key="2"/>
<keyword id="KW-1185">Reference proteome</keyword>
<keyword id="KW-0687">Ribonucleoprotein</keyword>
<keyword id="KW-0689">Ribosomal protein</keyword>
<organism>
    <name type="scientific">Desulforudis audaxviator (strain MP104C)</name>
    <dbReference type="NCBI Taxonomy" id="477974"/>
    <lineage>
        <taxon>Bacteria</taxon>
        <taxon>Bacillati</taxon>
        <taxon>Bacillota</taxon>
        <taxon>Clostridia</taxon>
        <taxon>Thermoanaerobacterales</taxon>
        <taxon>Candidatus Desulforudaceae</taxon>
        <taxon>Candidatus Desulforudis</taxon>
    </lineage>
</organism>